<gene>
    <name evidence="1" type="primary">rpmF</name>
    <name evidence="1" type="synonym">rpl32</name>
    <name type="ordered locus">Cyan7425_4059</name>
</gene>
<name>RL32_CYAP4</name>
<dbReference type="EMBL" id="CP001344">
    <property type="protein sequence ID" value="ACL46373.1"/>
    <property type="molecule type" value="Genomic_DNA"/>
</dbReference>
<dbReference type="SMR" id="B8HVR1"/>
<dbReference type="STRING" id="395961.Cyan7425_4059"/>
<dbReference type="KEGG" id="cyn:Cyan7425_4059"/>
<dbReference type="eggNOG" id="COG0333">
    <property type="taxonomic scope" value="Bacteria"/>
</dbReference>
<dbReference type="HOGENOM" id="CLU_199882_0_0_3"/>
<dbReference type="OrthoDB" id="541730at2"/>
<dbReference type="GO" id="GO:0015934">
    <property type="term" value="C:large ribosomal subunit"/>
    <property type="evidence" value="ECO:0007669"/>
    <property type="project" value="InterPro"/>
</dbReference>
<dbReference type="GO" id="GO:0003735">
    <property type="term" value="F:structural constituent of ribosome"/>
    <property type="evidence" value="ECO:0007669"/>
    <property type="project" value="InterPro"/>
</dbReference>
<dbReference type="GO" id="GO:0006412">
    <property type="term" value="P:translation"/>
    <property type="evidence" value="ECO:0007669"/>
    <property type="project" value="UniProtKB-UniRule"/>
</dbReference>
<dbReference type="Gene3D" id="1.20.5.640">
    <property type="entry name" value="Single helix bin"/>
    <property type="match status" value="1"/>
</dbReference>
<dbReference type="HAMAP" id="MF_00340">
    <property type="entry name" value="Ribosomal_bL32"/>
    <property type="match status" value="1"/>
</dbReference>
<dbReference type="InterPro" id="IPR002677">
    <property type="entry name" value="Ribosomal_bL32"/>
</dbReference>
<dbReference type="InterPro" id="IPR044958">
    <property type="entry name" value="Ribosomal_bL32_plant/cyanobact"/>
</dbReference>
<dbReference type="InterPro" id="IPR011332">
    <property type="entry name" value="Ribosomal_zn-bd"/>
</dbReference>
<dbReference type="NCBIfam" id="TIGR01031">
    <property type="entry name" value="rpmF_bact"/>
    <property type="match status" value="1"/>
</dbReference>
<dbReference type="PANTHER" id="PTHR36083">
    <property type="entry name" value="50S RIBOSOMAL PROTEIN L32, CHLOROPLASTIC"/>
    <property type="match status" value="1"/>
</dbReference>
<dbReference type="PANTHER" id="PTHR36083:SF1">
    <property type="entry name" value="LARGE RIBOSOMAL SUBUNIT PROTEIN BL32C"/>
    <property type="match status" value="1"/>
</dbReference>
<dbReference type="Pfam" id="PF01783">
    <property type="entry name" value="Ribosomal_L32p"/>
    <property type="match status" value="1"/>
</dbReference>
<dbReference type="SUPFAM" id="SSF57829">
    <property type="entry name" value="Zn-binding ribosomal proteins"/>
    <property type="match status" value="1"/>
</dbReference>
<protein>
    <recommendedName>
        <fullName evidence="1">Large ribosomal subunit protein bL32</fullName>
    </recommendedName>
    <alternativeName>
        <fullName evidence="3">50S ribosomal protein L32</fullName>
    </alternativeName>
</protein>
<comment type="similarity">
    <text evidence="1">Belongs to the bacterial ribosomal protein bL32 family.</text>
</comment>
<evidence type="ECO:0000255" key="1">
    <source>
        <dbReference type="HAMAP-Rule" id="MF_00340"/>
    </source>
</evidence>
<evidence type="ECO:0000256" key="2">
    <source>
        <dbReference type="SAM" id="MobiDB-lite"/>
    </source>
</evidence>
<evidence type="ECO:0000305" key="3"/>
<accession>B8HVR1</accession>
<reference key="1">
    <citation type="journal article" date="2011" name="MBio">
        <title>Novel metabolic attributes of the genus Cyanothece, comprising a group of unicellular nitrogen-fixing Cyanobacteria.</title>
        <authorList>
            <person name="Bandyopadhyay A."/>
            <person name="Elvitigala T."/>
            <person name="Welsh E."/>
            <person name="Stockel J."/>
            <person name="Liberton M."/>
            <person name="Min H."/>
            <person name="Sherman L.A."/>
            <person name="Pakrasi H.B."/>
        </authorList>
    </citation>
    <scope>NUCLEOTIDE SEQUENCE [LARGE SCALE GENOMIC DNA]</scope>
    <source>
        <strain>PCC 7425 / ATCC 29141</strain>
    </source>
</reference>
<keyword id="KW-0687">Ribonucleoprotein</keyword>
<keyword id="KW-0689">Ribosomal protein</keyword>
<proteinExistence type="inferred from homology"/>
<organism>
    <name type="scientific">Cyanothece sp. (strain PCC 7425 / ATCC 29141)</name>
    <dbReference type="NCBI Taxonomy" id="395961"/>
    <lineage>
        <taxon>Bacteria</taxon>
        <taxon>Bacillati</taxon>
        <taxon>Cyanobacteriota</taxon>
        <taxon>Cyanophyceae</taxon>
        <taxon>Gomontiellales</taxon>
        <taxon>Cyanothecaceae</taxon>
        <taxon>Cyanothece</taxon>
    </lineage>
</organism>
<sequence length="59" mass="6704">MAVPKKKTSKSKRDMRRATWNRKAAAQAQRALSLGKSILTGQAKGFYYPTDEEEEQEES</sequence>
<feature type="chain" id="PRO_1000195971" description="Large ribosomal subunit protein bL32">
    <location>
        <begin position="1"/>
        <end position="59"/>
    </location>
</feature>
<feature type="region of interest" description="Disordered" evidence="2">
    <location>
        <begin position="1"/>
        <end position="26"/>
    </location>
</feature>
<feature type="compositionally biased region" description="Basic residues" evidence="2">
    <location>
        <begin position="1"/>
        <end position="15"/>
    </location>
</feature>